<reference key="1">
    <citation type="submission" date="2007-12" db="EMBL/GenBank/DDBJ databases">
        <title>Brucella suis ATCC 23445 whole genome shotgun sequencing project.</title>
        <authorList>
            <person name="Setubal J.C."/>
            <person name="Bowns C."/>
            <person name="Boyle S."/>
            <person name="Crasta O.R."/>
            <person name="Czar M.J."/>
            <person name="Dharmanolla C."/>
            <person name="Gillespie J.J."/>
            <person name="Kenyon R.W."/>
            <person name="Lu J."/>
            <person name="Mane S."/>
            <person name="Mohapatra S."/>
            <person name="Nagrani S."/>
            <person name="Purkayastha A."/>
            <person name="Rajasimha H.K."/>
            <person name="Shallom J.M."/>
            <person name="Shallom S."/>
            <person name="Shukla M."/>
            <person name="Snyder E.E."/>
            <person name="Sobral B.W."/>
            <person name="Wattam A.R."/>
            <person name="Will R."/>
            <person name="Williams K."/>
            <person name="Yoo H."/>
            <person name="Bruce D."/>
            <person name="Detter C."/>
            <person name="Munk C."/>
            <person name="Brettin T.S."/>
        </authorList>
    </citation>
    <scope>NUCLEOTIDE SEQUENCE [LARGE SCALE GENOMIC DNA]</scope>
    <source>
        <strain>ATCC 23445 / NCTC 10510</strain>
    </source>
</reference>
<sequence length="910" mass="98824">MEAKVEEKEPEPVENAGPDAPVRLTPMMEQYIEIKAANVDSLLFYRMGDFYELFFDDAVAASAALGITLTKRGKHLGEDIPMCGVPVHAADDYLQKLIAKGYRVAVCEQVEDPAEAKKRGSKSVVKRDVIRLVTPGTLTEEKLLDPAQANFLMAMGRTRGDGALALAWIDISTGTFRVAETTPDRLFADIMRVDPRELVVADSAFHDEELRPVFDLIGKAVTPQPATLFDSAAAQTRIQHYFNVATLDGFGQFSRPELSAISGAIAYIEKTQISERPPLMRPEREHEGGTLFIDPATRASLELARTMSGNRDGSLLKAIDRTVTGGGARLLAERLTAPLTSPKEIALRLDSVSWCLSEQTLCEALRLELKGVPDMPRALSRLAVGRGGPRDLGALACGFEAAGGIASLLDGALLPDELAAARESIEKMPAGFAAHLDRALADELPLLKRDGGFVREGYNSELDEMRALRDQSRRVIAGLQADYIEETGIKSLKIKHNNVLGYFIEVTANNSGAMTDTDEAKSRFIHRQTMANAMRFTTTELAELESKIANAADRALSIELAIFEELTAEAVAHADSIRAAASALSVFDVSTALAVLAEEQGYCRPHVDDSLSFNIVAGRHPVVEQALRRQAANPFVANDCDLSPQRDGGDGAIWLLTGPNMGGKSTFLRQNALIAILAQMGSFVPAGSAHIGVVDRLFSRVGASDDLARGRSTFMVEMVETAAILNQAGEHSLVILDEIGRGTATFDGLSIAWAAVEYLHEKNRCRALFATHFHEMTALSEKLERLSNVTMRVKEWDNDVIFLHEVAKGAADRSYGVQVARLAGLPEAVVNRARDVLHQLEAGETSGKADRLIDDLPLFSVMLQQEKPKPQIQAKDSELANAVAAISPDELTPREALDLIYKLKELAGKA</sequence>
<name>MUTS_BRUSI</name>
<gene>
    <name evidence="1" type="primary">mutS</name>
    <name type="ordered locus">BSUIS_A0148</name>
</gene>
<accession>B0CIQ5</accession>
<comment type="function">
    <text evidence="1">This protein is involved in the repair of mismatches in DNA. It is possible that it carries out the mismatch recognition step. This protein has a weak ATPase activity.</text>
</comment>
<comment type="similarity">
    <text evidence="1">Belongs to the DNA mismatch repair MutS family.</text>
</comment>
<proteinExistence type="inferred from homology"/>
<evidence type="ECO:0000255" key="1">
    <source>
        <dbReference type="HAMAP-Rule" id="MF_00096"/>
    </source>
</evidence>
<evidence type="ECO:0000256" key="2">
    <source>
        <dbReference type="SAM" id="MobiDB-lite"/>
    </source>
</evidence>
<organism>
    <name type="scientific">Brucella suis (strain ATCC 23445 / NCTC 10510)</name>
    <dbReference type="NCBI Taxonomy" id="470137"/>
    <lineage>
        <taxon>Bacteria</taxon>
        <taxon>Pseudomonadati</taxon>
        <taxon>Pseudomonadota</taxon>
        <taxon>Alphaproteobacteria</taxon>
        <taxon>Hyphomicrobiales</taxon>
        <taxon>Brucellaceae</taxon>
        <taxon>Brucella/Ochrobactrum group</taxon>
        <taxon>Brucella</taxon>
    </lineage>
</organism>
<feature type="chain" id="PRO_0000335125" description="DNA mismatch repair protein MutS">
    <location>
        <begin position="1"/>
        <end position="910"/>
    </location>
</feature>
<feature type="region of interest" description="Disordered" evidence="2">
    <location>
        <begin position="1"/>
        <end position="21"/>
    </location>
</feature>
<feature type="compositionally biased region" description="Basic and acidic residues" evidence="2">
    <location>
        <begin position="1"/>
        <end position="11"/>
    </location>
</feature>
<feature type="binding site" evidence="1">
    <location>
        <begin position="658"/>
        <end position="665"/>
    </location>
    <ligand>
        <name>ATP</name>
        <dbReference type="ChEBI" id="CHEBI:30616"/>
    </ligand>
</feature>
<keyword id="KW-0067">ATP-binding</keyword>
<keyword id="KW-0227">DNA damage</keyword>
<keyword id="KW-0234">DNA repair</keyword>
<keyword id="KW-0238">DNA-binding</keyword>
<keyword id="KW-0547">Nucleotide-binding</keyword>
<dbReference type="EMBL" id="CP000911">
    <property type="protein sequence ID" value="ABY37251.1"/>
    <property type="molecule type" value="Genomic_DNA"/>
</dbReference>
<dbReference type="RefSeq" id="WP_006071981.1">
    <property type="nucleotide sequence ID" value="NC_010169.1"/>
</dbReference>
<dbReference type="SMR" id="B0CIQ5"/>
<dbReference type="KEGG" id="bmt:BSUIS_A0148"/>
<dbReference type="HOGENOM" id="CLU_002472_4_0_5"/>
<dbReference type="Proteomes" id="UP000008545">
    <property type="component" value="Chromosome I"/>
</dbReference>
<dbReference type="GO" id="GO:0005829">
    <property type="term" value="C:cytosol"/>
    <property type="evidence" value="ECO:0007669"/>
    <property type="project" value="TreeGrafter"/>
</dbReference>
<dbReference type="GO" id="GO:0005524">
    <property type="term" value="F:ATP binding"/>
    <property type="evidence" value="ECO:0007669"/>
    <property type="project" value="UniProtKB-UniRule"/>
</dbReference>
<dbReference type="GO" id="GO:0140664">
    <property type="term" value="F:ATP-dependent DNA damage sensor activity"/>
    <property type="evidence" value="ECO:0007669"/>
    <property type="project" value="InterPro"/>
</dbReference>
<dbReference type="GO" id="GO:0003684">
    <property type="term" value="F:damaged DNA binding"/>
    <property type="evidence" value="ECO:0007669"/>
    <property type="project" value="UniProtKB-UniRule"/>
</dbReference>
<dbReference type="GO" id="GO:0030983">
    <property type="term" value="F:mismatched DNA binding"/>
    <property type="evidence" value="ECO:0007669"/>
    <property type="project" value="InterPro"/>
</dbReference>
<dbReference type="GO" id="GO:0006298">
    <property type="term" value="P:mismatch repair"/>
    <property type="evidence" value="ECO:0007669"/>
    <property type="project" value="UniProtKB-UniRule"/>
</dbReference>
<dbReference type="CDD" id="cd03284">
    <property type="entry name" value="ABC_MutS1"/>
    <property type="match status" value="1"/>
</dbReference>
<dbReference type="FunFam" id="3.40.1170.10:FF:000001">
    <property type="entry name" value="DNA mismatch repair protein MutS"/>
    <property type="match status" value="1"/>
</dbReference>
<dbReference type="FunFam" id="3.40.50.300:FF:000870">
    <property type="entry name" value="MutS protein homolog 4"/>
    <property type="match status" value="1"/>
</dbReference>
<dbReference type="Gene3D" id="1.10.1420.10">
    <property type="match status" value="2"/>
</dbReference>
<dbReference type="Gene3D" id="6.10.140.430">
    <property type="match status" value="1"/>
</dbReference>
<dbReference type="Gene3D" id="3.40.1170.10">
    <property type="entry name" value="DNA repair protein MutS, domain I"/>
    <property type="match status" value="1"/>
</dbReference>
<dbReference type="Gene3D" id="3.30.420.110">
    <property type="entry name" value="MutS, connector domain"/>
    <property type="match status" value="1"/>
</dbReference>
<dbReference type="Gene3D" id="3.40.50.300">
    <property type="entry name" value="P-loop containing nucleotide triphosphate hydrolases"/>
    <property type="match status" value="1"/>
</dbReference>
<dbReference type="HAMAP" id="MF_00096">
    <property type="entry name" value="MutS"/>
    <property type="match status" value="1"/>
</dbReference>
<dbReference type="InterPro" id="IPR005748">
    <property type="entry name" value="DNA_mismatch_repair_MutS"/>
</dbReference>
<dbReference type="InterPro" id="IPR007695">
    <property type="entry name" value="DNA_mismatch_repair_MutS-lik_N"/>
</dbReference>
<dbReference type="InterPro" id="IPR017261">
    <property type="entry name" value="DNA_mismatch_repair_MutS/MSH"/>
</dbReference>
<dbReference type="InterPro" id="IPR000432">
    <property type="entry name" value="DNA_mismatch_repair_MutS_C"/>
</dbReference>
<dbReference type="InterPro" id="IPR007861">
    <property type="entry name" value="DNA_mismatch_repair_MutS_clamp"/>
</dbReference>
<dbReference type="InterPro" id="IPR007696">
    <property type="entry name" value="DNA_mismatch_repair_MutS_core"/>
</dbReference>
<dbReference type="InterPro" id="IPR016151">
    <property type="entry name" value="DNA_mismatch_repair_MutS_N"/>
</dbReference>
<dbReference type="InterPro" id="IPR036187">
    <property type="entry name" value="DNA_mismatch_repair_MutS_sf"/>
</dbReference>
<dbReference type="InterPro" id="IPR007860">
    <property type="entry name" value="DNA_mmatch_repair_MutS_con_dom"/>
</dbReference>
<dbReference type="InterPro" id="IPR045076">
    <property type="entry name" value="MutS"/>
</dbReference>
<dbReference type="InterPro" id="IPR036678">
    <property type="entry name" value="MutS_con_dom_sf"/>
</dbReference>
<dbReference type="InterPro" id="IPR027417">
    <property type="entry name" value="P-loop_NTPase"/>
</dbReference>
<dbReference type="NCBIfam" id="TIGR01070">
    <property type="entry name" value="mutS1"/>
    <property type="match status" value="1"/>
</dbReference>
<dbReference type="NCBIfam" id="NF003810">
    <property type="entry name" value="PRK05399.1"/>
    <property type="match status" value="1"/>
</dbReference>
<dbReference type="PANTHER" id="PTHR11361:SF34">
    <property type="entry name" value="DNA MISMATCH REPAIR PROTEIN MSH1, MITOCHONDRIAL"/>
    <property type="match status" value="1"/>
</dbReference>
<dbReference type="PANTHER" id="PTHR11361">
    <property type="entry name" value="DNA MISMATCH REPAIR PROTEIN MUTS FAMILY MEMBER"/>
    <property type="match status" value="1"/>
</dbReference>
<dbReference type="Pfam" id="PF01624">
    <property type="entry name" value="MutS_I"/>
    <property type="match status" value="1"/>
</dbReference>
<dbReference type="Pfam" id="PF05188">
    <property type="entry name" value="MutS_II"/>
    <property type="match status" value="1"/>
</dbReference>
<dbReference type="Pfam" id="PF05192">
    <property type="entry name" value="MutS_III"/>
    <property type="match status" value="1"/>
</dbReference>
<dbReference type="Pfam" id="PF05190">
    <property type="entry name" value="MutS_IV"/>
    <property type="match status" value="1"/>
</dbReference>
<dbReference type="Pfam" id="PF00488">
    <property type="entry name" value="MutS_V"/>
    <property type="match status" value="1"/>
</dbReference>
<dbReference type="PIRSF" id="PIRSF037677">
    <property type="entry name" value="DNA_mis_repair_Msh6"/>
    <property type="match status" value="1"/>
</dbReference>
<dbReference type="SMART" id="SM00534">
    <property type="entry name" value="MUTSac"/>
    <property type="match status" value="1"/>
</dbReference>
<dbReference type="SMART" id="SM00533">
    <property type="entry name" value="MUTSd"/>
    <property type="match status" value="1"/>
</dbReference>
<dbReference type="SUPFAM" id="SSF55271">
    <property type="entry name" value="DNA repair protein MutS, domain I"/>
    <property type="match status" value="1"/>
</dbReference>
<dbReference type="SUPFAM" id="SSF53150">
    <property type="entry name" value="DNA repair protein MutS, domain II"/>
    <property type="match status" value="1"/>
</dbReference>
<dbReference type="SUPFAM" id="SSF48334">
    <property type="entry name" value="DNA repair protein MutS, domain III"/>
    <property type="match status" value="1"/>
</dbReference>
<dbReference type="SUPFAM" id="SSF52540">
    <property type="entry name" value="P-loop containing nucleoside triphosphate hydrolases"/>
    <property type="match status" value="1"/>
</dbReference>
<dbReference type="PROSITE" id="PS00486">
    <property type="entry name" value="DNA_MISMATCH_REPAIR_2"/>
    <property type="match status" value="1"/>
</dbReference>
<protein>
    <recommendedName>
        <fullName evidence="1">DNA mismatch repair protein MutS</fullName>
    </recommendedName>
</protein>